<sequence length="841" mass="96942">MTKELRSKLFTILKIAFALTLFTIVAITLYKELSHINLKDAIKSFSKINRFWLVALFLSGGASIIVLSIYDVILAKTLKLKIGLAKTIRIGYIVNALNAVVGFGGFIGASVRFLFYKNTTDDKKALFHTISIVLISMLTGLSLLSILVVIHVFDISHIFTPYPWVKWLMYVVALFLPIFVVFTIIKPVQKTHRLLGVYCTIVSGVEWFVAALVLYMSMAIVGVQIPFATFMGIFILAALSGLISFIPGGFGTFDLVVLLGLKALNVNEEAIVLGLSLYRFAYYLFPVLIALILSTFEFRSTAKRYWEDSRILVPVKDMTSLLGSYQKDIIARIPSFAIALLLLFTSLVFFLNNLTIIYDGLYDPNHYIYYIIVSIHTCACLLLLLNVIGVYKLSKRAILFSIISVLFIFIATAYTYASFILLSWLTVIFILLLVFYRRARVIKRPFRYSKLLLSVITGAIILYINHLVIKSTFYSLEIYHIEMLTSILRYYFWITILLVAIIVGVIVWWFEYRYRSSNSRDNIATCESIIDKYNGNYLSHLMYSGDKKFFINDNKDAFVMYRYHNNTYIILGDPIGNSESFYSLLEAFYKEAEYLGYDIIFYQVTDKYMSLYHSFGNQFFKLGEEAVINLTSFTTSGKKKRGLRATLNKLDDLGYSFEVLEPPFSQQMITDLKAISDDWLADKNEMHFSVGSFDEHYISQAPIGVLKDNEQSVIAFCTLMPTYYNGVISVDLIRWKQDIELPLMDSLYLNMLLWSKDNNYEHFNMGMATLSNVGQIPYSFYGERIAGRVFEHFNGLYRFQGLRRYKEKFNPKWEPRFLVYRKHQSLWVSMLKVMRVIRKNN</sequence>
<name>MPRF_STAXY</name>
<accession>Q93QY7</accession>
<evidence type="ECO:0000255" key="1"/>
<evidence type="ECO:0000305" key="2"/>
<protein>
    <recommendedName>
        <fullName>Phosphatidylglycerol lysyltransferase</fullName>
        <ecNumber>2.3.2.3</ecNumber>
    </recommendedName>
    <alternativeName>
        <fullName>Lysylphosphatidylglycerol synthase</fullName>
        <shortName>LPG synthase</shortName>
    </alternativeName>
    <alternativeName>
        <fullName>Multiple peptide resistance factor</fullName>
    </alternativeName>
</protein>
<proteinExistence type="inferred from homology"/>
<keyword id="KW-0046">Antibiotic resistance</keyword>
<keyword id="KW-1003">Cell membrane</keyword>
<keyword id="KW-0443">Lipid metabolism</keyword>
<keyword id="KW-0472">Membrane</keyword>
<keyword id="KW-0808">Transferase</keyword>
<keyword id="KW-0812">Transmembrane</keyword>
<keyword id="KW-1133">Transmembrane helix</keyword>
<keyword id="KW-0843">Virulence</keyword>
<feature type="chain" id="PRO_0000096569" description="Phosphatidylglycerol lysyltransferase">
    <location>
        <begin position="1"/>
        <end position="841"/>
    </location>
</feature>
<feature type="topological domain" description="Cytoplasmic" evidence="1">
    <location>
        <begin position="1"/>
        <end position="8"/>
    </location>
</feature>
<feature type="transmembrane region" description="Helical" evidence="1">
    <location>
        <begin position="9"/>
        <end position="29"/>
    </location>
</feature>
<feature type="topological domain" description="Extracellular" evidence="1">
    <location>
        <begin position="30"/>
        <end position="52"/>
    </location>
</feature>
<feature type="transmembrane region" description="Helical" evidence="1">
    <location>
        <begin position="53"/>
        <end position="73"/>
    </location>
</feature>
<feature type="topological domain" description="Cytoplasmic" evidence="1">
    <location>
        <begin position="74"/>
        <end position="89"/>
    </location>
</feature>
<feature type="transmembrane region" description="Helical" evidence="1">
    <location>
        <begin position="90"/>
        <end position="110"/>
    </location>
</feature>
<feature type="topological domain" description="Extracellular" evidence="1">
    <location>
        <begin position="111"/>
        <end position="129"/>
    </location>
</feature>
<feature type="transmembrane region" description="Helical" evidence="1">
    <location>
        <begin position="130"/>
        <end position="150"/>
    </location>
</feature>
<feature type="topological domain" description="Cytoplasmic" evidence="1">
    <location>
        <begin position="151"/>
        <end position="164"/>
    </location>
</feature>
<feature type="transmembrane region" description="Helical" evidence="1">
    <location>
        <begin position="165"/>
        <end position="185"/>
    </location>
</feature>
<feature type="topological domain" description="Extracellular" evidence="1">
    <location>
        <begin position="186"/>
        <end position="193"/>
    </location>
</feature>
<feature type="transmembrane region" description="Helical" evidence="1">
    <location>
        <begin position="194"/>
        <end position="216"/>
    </location>
</feature>
<feature type="topological domain" description="Cytoplasmic" evidence="1">
    <location>
        <begin position="217"/>
        <end position="229"/>
    </location>
</feature>
<feature type="transmembrane region" description="Helical" evidence="1">
    <location>
        <begin position="230"/>
        <end position="250"/>
    </location>
</feature>
<feature type="topological domain" description="Extracellular" evidence="1">
    <location>
        <begin position="251"/>
        <end position="270"/>
    </location>
</feature>
<feature type="transmembrane region" description="Helical" evidence="1">
    <location>
        <begin position="271"/>
        <end position="291"/>
    </location>
</feature>
<feature type="topological domain" description="Cytoplasmic" evidence="1">
    <location>
        <begin position="292"/>
        <end position="336"/>
    </location>
</feature>
<feature type="transmembrane region" description="Helical" evidence="1">
    <location>
        <begin position="337"/>
        <end position="357"/>
    </location>
</feature>
<feature type="topological domain" description="Extracellular" evidence="1">
    <location>
        <begin position="358"/>
        <end position="367"/>
    </location>
</feature>
<feature type="transmembrane region" description="Helical" evidence="1">
    <location>
        <begin position="368"/>
        <end position="388"/>
    </location>
</feature>
<feature type="topological domain" description="Cytoplasmic" evidence="1">
    <location>
        <begin position="389"/>
        <end position="392"/>
    </location>
</feature>
<feature type="transmembrane region" description="Helical" evidence="1">
    <location>
        <begin position="393"/>
        <end position="413"/>
    </location>
</feature>
<feature type="topological domain" description="Extracellular" evidence="1">
    <location>
        <begin position="414"/>
        <end position="415"/>
    </location>
</feature>
<feature type="transmembrane region" description="Helical" evidence="1">
    <location>
        <begin position="416"/>
        <end position="436"/>
    </location>
</feature>
<feature type="topological domain" description="Cytoplasmic" evidence="1">
    <location>
        <begin position="437"/>
        <end position="448"/>
    </location>
</feature>
<feature type="transmembrane region" description="Helical" evidence="1">
    <location>
        <begin position="449"/>
        <end position="469"/>
    </location>
</feature>
<feature type="topological domain" description="Extracellular" evidence="1">
    <location>
        <begin position="470"/>
        <end position="489"/>
    </location>
</feature>
<feature type="transmembrane region" description="Helical" evidence="1">
    <location>
        <begin position="490"/>
        <end position="510"/>
    </location>
</feature>
<feature type="topological domain" description="Cytoplasmic" evidence="1">
    <location>
        <begin position="511"/>
        <end position="841"/>
    </location>
</feature>
<reference key="1">
    <citation type="journal article" date="2001" name="J. Exp. Med.">
        <title>Staphylococcus aureus resistance to human defensins and evasion of neutrophil killing via the novel virulence factor MprF is based on modification of membrane lipids with L-lysine.</title>
        <authorList>
            <person name="Peschel A."/>
            <person name="Jack R.W."/>
            <person name="Otto M."/>
            <person name="Collins L.V."/>
            <person name="Staubitz P."/>
            <person name="Nicholson G."/>
            <person name="Kalbacher H."/>
            <person name="Nieuwenhuizen W.F."/>
            <person name="Jung G."/>
            <person name="Tarkowski A."/>
            <person name="van Kessel K.P.M."/>
            <person name="van Strijp J.A.G."/>
        </authorList>
    </citation>
    <scope>NUCLEOTIDE SEQUENCE [GENOMIC DNA]</scope>
    <scope>HOST DEFENSE PEPTIDES RESISTANCE</scope>
    <source>
        <strain>DSM 20267 / Isolate C2A</strain>
    </source>
</reference>
<reference key="2">
    <citation type="journal article" date="2003" name="Infect. Immun.">
        <title>MprF-mediated lysinylation of phospholipids in Staphylococcus aureus leads to protection against oxygen-independent neutrophil killing.</title>
        <authorList>
            <person name="Kristian S.A."/>
            <person name="Duerr M."/>
            <person name="van Strijp J.A.G."/>
            <person name="Neumeister B."/>
            <person name="Peschel A."/>
        </authorList>
    </citation>
    <scope>HOST DEFENSE PEPTIDES RESISTANCE</scope>
    <source>
        <strain>DSM 20267 / Isolate C2A</strain>
    </source>
</reference>
<organism>
    <name type="scientific">Staphylococcus xylosus</name>
    <dbReference type="NCBI Taxonomy" id="1288"/>
    <lineage>
        <taxon>Bacteria</taxon>
        <taxon>Bacillati</taxon>
        <taxon>Bacillota</taxon>
        <taxon>Bacilli</taxon>
        <taxon>Bacillales</taxon>
        <taxon>Staphylococcaceae</taxon>
        <taxon>Staphylococcus</taxon>
    </lineage>
</organism>
<comment type="function">
    <text>Catalyzes the transfer of a lysyl group from L-lysyl-tRNA(Lys) to membrane-bound phosphatidylglycerol (PG), which produces lysylphosphatidylglycerol (LPG), a major component of the bacterial membrane with a positive net charge. LPG synthesis contributes to bacterial virulence as it is involved in the resistance mechanism against cationic antimicrobial peptides (CAMP) produces by the host's immune system (defensins, cathelicidins) and by the competing microorganisms (bacteriocins). In fact, the modification of anionic phosphatidylglycerol with positively charged L-lysine results in repulsion of the peptides.</text>
</comment>
<comment type="catalytic activity">
    <reaction>
        <text>L-lysyl-tRNA(Lys) + a 1,2-diacyl-sn-glycero-3-phospho-(1'-sn-glycerol) = a 1,2-diacyl-sn-glycero-3-phospho-1'-(3'-O-L-lysyl)-sn-glycerol + tRNA(Lys)</text>
        <dbReference type="Rhea" id="RHEA:10668"/>
        <dbReference type="Rhea" id="RHEA-COMP:9696"/>
        <dbReference type="Rhea" id="RHEA-COMP:9697"/>
        <dbReference type="ChEBI" id="CHEBI:64716"/>
        <dbReference type="ChEBI" id="CHEBI:75792"/>
        <dbReference type="ChEBI" id="CHEBI:78442"/>
        <dbReference type="ChEBI" id="CHEBI:78529"/>
        <dbReference type="EC" id="2.3.2.3"/>
    </reaction>
</comment>
<comment type="subcellular location">
    <subcellularLocation>
        <location>Cell membrane</location>
        <topology>Multi-pass membrane protein</topology>
    </subcellularLocation>
</comment>
<comment type="similarity">
    <text evidence="2">Belongs to the LPG synthase family.</text>
</comment>
<dbReference type="EC" id="2.3.2.3"/>
<dbReference type="EMBL" id="AF145698">
    <property type="protein sequence ID" value="AAK58113.1"/>
    <property type="molecule type" value="Genomic_DNA"/>
</dbReference>
<dbReference type="RefSeq" id="WP_047172427.1">
    <property type="nucleotide sequence ID" value="NZ_LN554884.1"/>
</dbReference>
<dbReference type="SMR" id="Q93QY7"/>
<dbReference type="STRING" id="1288.AWC37_04610"/>
<dbReference type="KEGG" id="sxo:SXYL_01524"/>
<dbReference type="eggNOG" id="COG0392">
    <property type="taxonomic scope" value="Bacteria"/>
</dbReference>
<dbReference type="eggNOG" id="COG2898">
    <property type="taxonomic scope" value="Bacteria"/>
</dbReference>
<dbReference type="GO" id="GO:0005886">
    <property type="term" value="C:plasma membrane"/>
    <property type="evidence" value="ECO:0007669"/>
    <property type="project" value="UniProtKB-SubCell"/>
</dbReference>
<dbReference type="GO" id="GO:0050071">
    <property type="term" value="F:phosphatidylglycerol lysyltransferase activity"/>
    <property type="evidence" value="ECO:0007669"/>
    <property type="project" value="UniProtKB-EC"/>
</dbReference>
<dbReference type="GO" id="GO:0006629">
    <property type="term" value="P:lipid metabolic process"/>
    <property type="evidence" value="ECO:0007669"/>
    <property type="project" value="UniProtKB-KW"/>
</dbReference>
<dbReference type="GO" id="GO:0055091">
    <property type="term" value="P:phospholipid homeostasis"/>
    <property type="evidence" value="ECO:0007669"/>
    <property type="project" value="TreeGrafter"/>
</dbReference>
<dbReference type="GO" id="GO:0046677">
    <property type="term" value="P:response to antibiotic"/>
    <property type="evidence" value="ECO:0007669"/>
    <property type="project" value="UniProtKB-KW"/>
</dbReference>
<dbReference type="InterPro" id="IPR016181">
    <property type="entry name" value="Acyl_CoA_acyltransferase"/>
</dbReference>
<dbReference type="InterPro" id="IPR022791">
    <property type="entry name" value="L-PG_synthase/AglD"/>
</dbReference>
<dbReference type="InterPro" id="IPR024320">
    <property type="entry name" value="LPG_synthase_C"/>
</dbReference>
<dbReference type="InterPro" id="IPR051211">
    <property type="entry name" value="PG_lysyltransferase"/>
</dbReference>
<dbReference type="NCBIfam" id="NF033480">
    <property type="entry name" value="bifunc_MprF"/>
    <property type="match status" value="1"/>
</dbReference>
<dbReference type="PANTHER" id="PTHR34697">
    <property type="entry name" value="PHOSPHATIDYLGLYCEROL LYSYLTRANSFERASE"/>
    <property type="match status" value="1"/>
</dbReference>
<dbReference type="PANTHER" id="PTHR34697:SF2">
    <property type="entry name" value="PHOSPHATIDYLGLYCEROL LYSYLTRANSFERASE"/>
    <property type="match status" value="1"/>
</dbReference>
<dbReference type="Pfam" id="PF09924">
    <property type="entry name" value="LPG_synthase_C"/>
    <property type="match status" value="1"/>
</dbReference>
<dbReference type="Pfam" id="PF03706">
    <property type="entry name" value="LPG_synthase_TM"/>
    <property type="match status" value="1"/>
</dbReference>
<dbReference type="SUPFAM" id="SSF55729">
    <property type="entry name" value="Acyl-CoA N-acyltransferases (Nat)"/>
    <property type="match status" value="1"/>
</dbReference>
<gene>
    <name type="primary">mprF</name>
</gene>